<feature type="chain" id="PRO_1000116961" description="Sulfate adenylyltransferase subunit 2">
    <location>
        <begin position="1"/>
        <end position="302"/>
    </location>
</feature>
<comment type="function">
    <text evidence="1">With CysN forms the ATP sulfurylase (ATPS) that catalyzes the adenylation of sulfate producing adenosine 5'-phosphosulfate (APS) and diphosphate, the first enzymatic step in sulfur assimilation pathway. APS synthesis involves the formation of a high-energy phosphoric-sulfuric acid anhydride bond driven by GTP hydrolysis by CysN coupled to ATP hydrolysis by CysD.</text>
</comment>
<comment type="catalytic activity">
    <reaction evidence="1">
        <text>sulfate + ATP + H(+) = adenosine 5'-phosphosulfate + diphosphate</text>
        <dbReference type="Rhea" id="RHEA:18133"/>
        <dbReference type="ChEBI" id="CHEBI:15378"/>
        <dbReference type="ChEBI" id="CHEBI:16189"/>
        <dbReference type="ChEBI" id="CHEBI:30616"/>
        <dbReference type="ChEBI" id="CHEBI:33019"/>
        <dbReference type="ChEBI" id="CHEBI:58243"/>
        <dbReference type="EC" id="2.7.7.4"/>
    </reaction>
</comment>
<comment type="pathway">
    <text evidence="1">Sulfur metabolism; hydrogen sulfide biosynthesis; sulfite from sulfate: step 1/3.</text>
</comment>
<comment type="subunit">
    <text evidence="1">Heterodimer composed of CysD, the smaller subunit, and CysN.</text>
</comment>
<comment type="similarity">
    <text evidence="1">Belongs to the PAPS reductase family. CysD subfamily.</text>
</comment>
<protein>
    <recommendedName>
        <fullName evidence="1">Sulfate adenylyltransferase subunit 2</fullName>
        <ecNumber evidence="1">2.7.7.4</ecNumber>
    </recommendedName>
    <alternativeName>
        <fullName evidence="1">ATP-sulfurylase small subunit</fullName>
    </alternativeName>
    <alternativeName>
        <fullName evidence="1">Sulfate adenylate transferase</fullName>
        <shortName evidence="1">SAT</shortName>
    </alternativeName>
</protein>
<organism>
    <name type="scientific">Escherichia fergusonii (strain ATCC 35469 / DSM 13698 / CCUG 18766 / IAM 14443 / JCM 21226 / LMG 7866 / NBRC 102419 / NCTC 12128 / CDC 0568-73)</name>
    <dbReference type="NCBI Taxonomy" id="585054"/>
    <lineage>
        <taxon>Bacteria</taxon>
        <taxon>Pseudomonadati</taxon>
        <taxon>Pseudomonadota</taxon>
        <taxon>Gammaproteobacteria</taxon>
        <taxon>Enterobacterales</taxon>
        <taxon>Enterobacteriaceae</taxon>
        <taxon>Escherichia</taxon>
    </lineage>
</organism>
<sequence length="302" mass="35203">MDQKRLTHLRQLEAESIHIIREVAAEFSNPVMLYSIGKDSSVMLHLARKAFYPGTLPFPLLHVDTGWKFREMYEFRDRTAKAYGCELLVHKNPEGVAMGINPFVHGSAKHTDIMKTEGLKQALNKYGFDAAFGGARRDEEKSRAKERIYSFRDRFHRWDPKNQRPELWHNYNGQINKGESIRVFPLSNWTEQDIWQYIWLENIDIVPLYLAAERPVLERDGMLMMIDDNRIDLQPGEVIKKRMVRFRTLGCWPLTGAVESNAQTLPEIIEEMLVSTTSERQGRVIDRDQAGSMELKKRQGYF</sequence>
<reference key="1">
    <citation type="journal article" date="2009" name="PLoS Genet.">
        <title>Organised genome dynamics in the Escherichia coli species results in highly diverse adaptive paths.</title>
        <authorList>
            <person name="Touchon M."/>
            <person name="Hoede C."/>
            <person name="Tenaillon O."/>
            <person name="Barbe V."/>
            <person name="Baeriswyl S."/>
            <person name="Bidet P."/>
            <person name="Bingen E."/>
            <person name="Bonacorsi S."/>
            <person name="Bouchier C."/>
            <person name="Bouvet O."/>
            <person name="Calteau A."/>
            <person name="Chiapello H."/>
            <person name="Clermont O."/>
            <person name="Cruveiller S."/>
            <person name="Danchin A."/>
            <person name="Diard M."/>
            <person name="Dossat C."/>
            <person name="Karoui M.E."/>
            <person name="Frapy E."/>
            <person name="Garry L."/>
            <person name="Ghigo J.M."/>
            <person name="Gilles A.M."/>
            <person name="Johnson J."/>
            <person name="Le Bouguenec C."/>
            <person name="Lescat M."/>
            <person name="Mangenot S."/>
            <person name="Martinez-Jehanne V."/>
            <person name="Matic I."/>
            <person name="Nassif X."/>
            <person name="Oztas S."/>
            <person name="Petit M.A."/>
            <person name="Pichon C."/>
            <person name="Rouy Z."/>
            <person name="Ruf C.S."/>
            <person name="Schneider D."/>
            <person name="Tourret J."/>
            <person name="Vacherie B."/>
            <person name="Vallenet D."/>
            <person name="Medigue C."/>
            <person name="Rocha E.P.C."/>
            <person name="Denamur E."/>
        </authorList>
    </citation>
    <scope>NUCLEOTIDE SEQUENCE [LARGE SCALE GENOMIC DNA]</scope>
    <source>
        <strain>ATCC 35469 / DSM 13698 / BCRC 15582 / CCUG 18766 / IAM 14443 / JCM 21226 / LMG 7866 / NBRC 102419 / NCTC 12128 / CDC 0568-73</strain>
    </source>
</reference>
<gene>
    <name evidence="1" type="primary">cysD</name>
    <name type="ordered locus">EFER_0315</name>
</gene>
<accession>B7LWK3</accession>
<keyword id="KW-0067">ATP-binding</keyword>
<keyword id="KW-0547">Nucleotide-binding</keyword>
<keyword id="KW-0548">Nucleotidyltransferase</keyword>
<keyword id="KW-0808">Transferase</keyword>
<proteinExistence type="inferred from homology"/>
<evidence type="ECO:0000255" key="1">
    <source>
        <dbReference type="HAMAP-Rule" id="MF_00064"/>
    </source>
</evidence>
<name>CYSD_ESCF3</name>
<dbReference type="EC" id="2.7.7.4" evidence="1"/>
<dbReference type="EMBL" id="CU928158">
    <property type="protein sequence ID" value="CAQ87879.1"/>
    <property type="molecule type" value="Genomic_DNA"/>
</dbReference>
<dbReference type="RefSeq" id="WP_000372392.1">
    <property type="nucleotide sequence ID" value="NC_011740.1"/>
</dbReference>
<dbReference type="SMR" id="B7LWK3"/>
<dbReference type="GeneID" id="89517568"/>
<dbReference type="KEGG" id="efe:EFER_0315"/>
<dbReference type="HOGENOM" id="CLU_043026_0_0_6"/>
<dbReference type="OrthoDB" id="9772604at2"/>
<dbReference type="UniPathway" id="UPA00140">
    <property type="reaction ID" value="UER00204"/>
</dbReference>
<dbReference type="Proteomes" id="UP000000745">
    <property type="component" value="Chromosome"/>
</dbReference>
<dbReference type="GO" id="GO:0005524">
    <property type="term" value="F:ATP binding"/>
    <property type="evidence" value="ECO:0007669"/>
    <property type="project" value="UniProtKB-KW"/>
</dbReference>
<dbReference type="GO" id="GO:0004781">
    <property type="term" value="F:sulfate adenylyltransferase (ATP) activity"/>
    <property type="evidence" value="ECO:0007669"/>
    <property type="project" value="UniProtKB-UniRule"/>
</dbReference>
<dbReference type="GO" id="GO:0070814">
    <property type="term" value="P:hydrogen sulfide biosynthetic process"/>
    <property type="evidence" value="ECO:0007669"/>
    <property type="project" value="UniProtKB-UniRule"/>
</dbReference>
<dbReference type="GO" id="GO:0000103">
    <property type="term" value="P:sulfate assimilation"/>
    <property type="evidence" value="ECO:0007669"/>
    <property type="project" value="UniProtKB-UniRule"/>
</dbReference>
<dbReference type="CDD" id="cd23946">
    <property type="entry name" value="Sulfate_adenylyltransferase_2"/>
    <property type="match status" value="1"/>
</dbReference>
<dbReference type="FunFam" id="3.40.50.620:FF:000002">
    <property type="entry name" value="Sulfate adenylyltransferase subunit 2"/>
    <property type="match status" value="1"/>
</dbReference>
<dbReference type="Gene3D" id="3.40.50.620">
    <property type="entry name" value="HUPs"/>
    <property type="match status" value="1"/>
</dbReference>
<dbReference type="HAMAP" id="MF_00064">
    <property type="entry name" value="Sulf_adenylyltr_sub2"/>
    <property type="match status" value="1"/>
</dbReference>
<dbReference type="InterPro" id="IPR002500">
    <property type="entry name" value="PAPS_reduct_dom"/>
</dbReference>
<dbReference type="InterPro" id="IPR014729">
    <property type="entry name" value="Rossmann-like_a/b/a_fold"/>
</dbReference>
<dbReference type="InterPro" id="IPR011784">
    <property type="entry name" value="SO4_adenylTrfase_ssu"/>
</dbReference>
<dbReference type="InterPro" id="IPR050128">
    <property type="entry name" value="Sulfate_adenylyltrnsfr_sub2"/>
</dbReference>
<dbReference type="NCBIfam" id="TIGR02039">
    <property type="entry name" value="CysD"/>
    <property type="match status" value="1"/>
</dbReference>
<dbReference type="NCBIfam" id="NF003587">
    <property type="entry name" value="PRK05253.1"/>
    <property type="match status" value="1"/>
</dbReference>
<dbReference type="NCBIfam" id="NF009214">
    <property type="entry name" value="PRK12563.1"/>
    <property type="match status" value="1"/>
</dbReference>
<dbReference type="PANTHER" id="PTHR43196">
    <property type="entry name" value="SULFATE ADENYLYLTRANSFERASE SUBUNIT 2"/>
    <property type="match status" value="1"/>
</dbReference>
<dbReference type="PANTHER" id="PTHR43196:SF1">
    <property type="entry name" value="SULFATE ADENYLYLTRANSFERASE SUBUNIT 2"/>
    <property type="match status" value="1"/>
</dbReference>
<dbReference type="Pfam" id="PF01507">
    <property type="entry name" value="PAPS_reduct"/>
    <property type="match status" value="1"/>
</dbReference>
<dbReference type="PIRSF" id="PIRSF002936">
    <property type="entry name" value="CysDAde_trans"/>
    <property type="match status" value="1"/>
</dbReference>
<dbReference type="SUPFAM" id="SSF52402">
    <property type="entry name" value="Adenine nucleotide alpha hydrolases-like"/>
    <property type="match status" value="1"/>
</dbReference>